<feature type="chain" id="PRO_0000109207" description="UDP-N-acetylglucosamine--N-acetylmuramyl-(pentapeptide) pyrophosphoryl-undecaprenol N-acetylglucosamine transferase">
    <location>
        <begin position="1"/>
        <end position="362"/>
    </location>
</feature>
<feature type="binding site" evidence="1">
    <location>
        <begin position="15"/>
        <end position="17"/>
    </location>
    <ligand>
        <name>UDP-N-acetyl-alpha-D-glucosamine</name>
        <dbReference type="ChEBI" id="CHEBI:57705"/>
    </ligand>
</feature>
<feature type="binding site" evidence="1">
    <location>
        <position position="127"/>
    </location>
    <ligand>
        <name>UDP-N-acetyl-alpha-D-glucosamine</name>
        <dbReference type="ChEBI" id="CHEBI:57705"/>
    </ligand>
</feature>
<feature type="binding site" evidence="1">
    <location>
        <position position="165"/>
    </location>
    <ligand>
        <name>UDP-N-acetyl-alpha-D-glucosamine</name>
        <dbReference type="ChEBI" id="CHEBI:57705"/>
    </ligand>
</feature>
<feature type="binding site" evidence="1">
    <location>
        <position position="191"/>
    </location>
    <ligand>
        <name>UDP-N-acetyl-alpha-D-glucosamine</name>
        <dbReference type="ChEBI" id="CHEBI:57705"/>
    </ligand>
</feature>
<feature type="binding site" evidence="1">
    <location>
        <position position="247"/>
    </location>
    <ligand>
        <name>UDP-N-acetyl-alpha-D-glucosamine</name>
        <dbReference type="ChEBI" id="CHEBI:57705"/>
    </ligand>
</feature>
<feature type="binding site" evidence="1">
    <location>
        <begin position="266"/>
        <end position="271"/>
    </location>
    <ligand>
        <name>UDP-N-acetyl-alpha-D-glucosamine</name>
        <dbReference type="ChEBI" id="CHEBI:57705"/>
    </ligand>
</feature>
<feature type="binding site" evidence="1">
    <location>
        <position position="292"/>
    </location>
    <ligand>
        <name>UDP-N-acetyl-alpha-D-glucosamine</name>
        <dbReference type="ChEBI" id="CHEBI:57705"/>
    </ligand>
</feature>
<comment type="function">
    <text evidence="1">Cell wall formation. Catalyzes the transfer of a GlcNAc subunit on undecaprenyl-pyrophosphoryl-MurNAc-pentapeptide (lipid intermediate I) to form undecaprenyl-pyrophosphoryl-MurNAc-(pentapeptide)GlcNAc (lipid intermediate II).</text>
</comment>
<comment type="catalytic activity">
    <reaction evidence="1">
        <text>di-trans,octa-cis-undecaprenyl diphospho-N-acetyl-alpha-D-muramoyl-L-alanyl-D-glutamyl-meso-2,6-diaminopimeloyl-D-alanyl-D-alanine + UDP-N-acetyl-alpha-D-glucosamine = di-trans,octa-cis-undecaprenyl diphospho-[N-acetyl-alpha-D-glucosaminyl-(1-&gt;4)]-N-acetyl-alpha-D-muramoyl-L-alanyl-D-glutamyl-meso-2,6-diaminopimeloyl-D-alanyl-D-alanine + UDP + H(+)</text>
        <dbReference type="Rhea" id="RHEA:31227"/>
        <dbReference type="ChEBI" id="CHEBI:15378"/>
        <dbReference type="ChEBI" id="CHEBI:57705"/>
        <dbReference type="ChEBI" id="CHEBI:58223"/>
        <dbReference type="ChEBI" id="CHEBI:61387"/>
        <dbReference type="ChEBI" id="CHEBI:61388"/>
        <dbReference type="EC" id="2.4.1.227"/>
    </reaction>
</comment>
<comment type="pathway">
    <text evidence="1">Cell wall biogenesis; peptidoglycan biosynthesis.</text>
</comment>
<comment type="subcellular location">
    <subcellularLocation>
        <location evidence="1">Cell inner membrane</location>
        <topology evidence="1">Peripheral membrane protein</topology>
        <orientation evidence="1">Cytoplasmic side</orientation>
    </subcellularLocation>
</comment>
<comment type="similarity">
    <text evidence="1">Belongs to the glycosyltransferase 28 family. MurG subfamily.</text>
</comment>
<keyword id="KW-0131">Cell cycle</keyword>
<keyword id="KW-0132">Cell division</keyword>
<keyword id="KW-0997">Cell inner membrane</keyword>
<keyword id="KW-1003">Cell membrane</keyword>
<keyword id="KW-0133">Cell shape</keyword>
<keyword id="KW-0961">Cell wall biogenesis/degradation</keyword>
<keyword id="KW-0328">Glycosyltransferase</keyword>
<keyword id="KW-0472">Membrane</keyword>
<keyword id="KW-0573">Peptidoglycan synthesis</keyword>
<keyword id="KW-1185">Reference proteome</keyword>
<keyword id="KW-0808">Transferase</keyword>
<proteinExistence type="inferred from homology"/>
<reference key="1">
    <citation type="journal article" date="2002" name="Nat. Biotechnol.">
        <title>Genome sequence of the dissimilatory metal ion-reducing bacterium Shewanella oneidensis.</title>
        <authorList>
            <person name="Heidelberg J.F."/>
            <person name="Paulsen I.T."/>
            <person name="Nelson K.E."/>
            <person name="Gaidos E.J."/>
            <person name="Nelson W.C."/>
            <person name="Read T.D."/>
            <person name="Eisen J.A."/>
            <person name="Seshadri R."/>
            <person name="Ward N.L."/>
            <person name="Methe B.A."/>
            <person name="Clayton R.A."/>
            <person name="Meyer T."/>
            <person name="Tsapin A."/>
            <person name="Scott J."/>
            <person name="Beanan M.J."/>
            <person name="Brinkac L.M."/>
            <person name="Daugherty S.C."/>
            <person name="DeBoy R.T."/>
            <person name="Dodson R.J."/>
            <person name="Durkin A.S."/>
            <person name="Haft D.H."/>
            <person name="Kolonay J.F."/>
            <person name="Madupu R."/>
            <person name="Peterson J.D."/>
            <person name="Umayam L.A."/>
            <person name="White O."/>
            <person name="Wolf A.M."/>
            <person name="Vamathevan J.J."/>
            <person name="Weidman J.F."/>
            <person name="Impraim M."/>
            <person name="Lee K."/>
            <person name="Berry K.J."/>
            <person name="Lee C."/>
            <person name="Mueller J."/>
            <person name="Khouri H.M."/>
            <person name="Gill J."/>
            <person name="Utterback T.R."/>
            <person name="McDonald L.A."/>
            <person name="Feldblyum T.V."/>
            <person name="Smith H.O."/>
            <person name="Venter J.C."/>
            <person name="Nealson K.H."/>
            <person name="Fraser C.M."/>
        </authorList>
    </citation>
    <scope>NUCLEOTIDE SEQUENCE [LARGE SCALE GENOMIC DNA]</scope>
    <source>
        <strain>ATCC 700550 / JCM 31522 / CIP 106686 / LMG 19005 / NCIMB 14063 / MR-1</strain>
    </source>
</reference>
<protein>
    <recommendedName>
        <fullName evidence="1">UDP-N-acetylglucosamine--N-acetylmuramyl-(pentapeptide) pyrophosphoryl-undecaprenol N-acetylglucosamine transferase</fullName>
        <ecNumber evidence="1">2.4.1.227</ecNumber>
    </recommendedName>
    <alternativeName>
        <fullName evidence="1">Undecaprenyl-PP-MurNAc-pentapeptide-UDPGlcNAc GlcNAc transferase</fullName>
    </alternativeName>
</protein>
<dbReference type="EC" id="2.4.1.227" evidence="1"/>
<dbReference type="EMBL" id="AE014299">
    <property type="protein sequence ID" value="AAN57191.1"/>
    <property type="molecule type" value="Genomic_DNA"/>
</dbReference>
<dbReference type="RefSeq" id="NP_719747.1">
    <property type="nucleotide sequence ID" value="NC_004347.2"/>
</dbReference>
<dbReference type="RefSeq" id="WP_011073900.1">
    <property type="nucleotide sequence ID" value="NC_004347.2"/>
</dbReference>
<dbReference type="SMR" id="Q8CX35"/>
<dbReference type="STRING" id="211586.SO_4219"/>
<dbReference type="CAZy" id="GT28">
    <property type="family name" value="Glycosyltransferase Family 28"/>
</dbReference>
<dbReference type="PaxDb" id="211586-SO_4219"/>
<dbReference type="KEGG" id="son:SO_4219"/>
<dbReference type="PATRIC" id="fig|211586.12.peg.4077"/>
<dbReference type="eggNOG" id="COG0707">
    <property type="taxonomic scope" value="Bacteria"/>
</dbReference>
<dbReference type="HOGENOM" id="CLU_037404_2_0_6"/>
<dbReference type="OrthoDB" id="9808936at2"/>
<dbReference type="PhylomeDB" id="Q8CX35"/>
<dbReference type="BioCyc" id="SONE211586:G1GMP-3896-MONOMER"/>
<dbReference type="UniPathway" id="UPA00219"/>
<dbReference type="Proteomes" id="UP000008186">
    <property type="component" value="Chromosome"/>
</dbReference>
<dbReference type="GO" id="GO:0005886">
    <property type="term" value="C:plasma membrane"/>
    <property type="evidence" value="ECO:0007669"/>
    <property type="project" value="UniProtKB-SubCell"/>
</dbReference>
<dbReference type="GO" id="GO:0051991">
    <property type="term" value="F:UDP-N-acetyl-D-glucosamine:N-acetylmuramoyl-L-alanyl-D-glutamyl-meso-2,6-diaminopimelyl-D-alanyl-D-alanine-diphosphoundecaprenol 4-beta-N-acetylglucosaminlytransferase activity"/>
    <property type="evidence" value="ECO:0007669"/>
    <property type="project" value="RHEA"/>
</dbReference>
<dbReference type="GO" id="GO:0050511">
    <property type="term" value="F:undecaprenyldiphospho-muramoylpentapeptide beta-N-acetylglucosaminyltransferase activity"/>
    <property type="evidence" value="ECO:0000318"/>
    <property type="project" value="GO_Central"/>
</dbReference>
<dbReference type="GO" id="GO:0005975">
    <property type="term" value="P:carbohydrate metabolic process"/>
    <property type="evidence" value="ECO:0007669"/>
    <property type="project" value="InterPro"/>
</dbReference>
<dbReference type="GO" id="GO:0051301">
    <property type="term" value="P:cell division"/>
    <property type="evidence" value="ECO:0007669"/>
    <property type="project" value="UniProtKB-KW"/>
</dbReference>
<dbReference type="GO" id="GO:0071555">
    <property type="term" value="P:cell wall organization"/>
    <property type="evidence" value="ECO:0007669"/>
    <property type="project" value="UniProtKB-KW"/>
</dbReference>
<dbReference type="GO" id="GO:0030259">
    <property type="term" value="P:lipid glycosylation"/>
    <property type="evidence" value="ECO:0007669"/>
    <property type="project" value="UniProtKB-UniRule"/>
</dbReference>
<dbReference type="GO" id="GO:0009252">
    <property type="term" value="P:peptidoglycan biosynthetic process"/>
    <property type="evidence" value="ECO:0007669"/>
    <property type="project" value="UniProtKB-UniRule"/>
</dbReference>
<dbReference type="GO" id="GO:0008360">
    <property type="term" value="P:regulation of cell shape"/>
    <property type="evidence" value="ECO:0007669"/>
    <property type="project" value="UniProtKB-KW"/>
</dbReference>
<dbReference type="CDD" id="cd03785">
    <property type="entry name" value="GT28_MurG"/>
    <property type="match status" value="1"/>
</dbReference>
<dbReference type="Gene3D" id="3.40.50.2000">
    <property type="entry name" value="Glycogen Phosphorylase B"/>
    <property type="match status" value="2"/>
</dbReference>
<dbReference type="HAMAP" id="MF_00033">
    <property type="entry name" value="MurG"/>
    <property type="match status" value="1"/>
</dbReference>
<dbReference type="InterPro" id="IPR006009">
    <property type="entry name" value="GlcNAc_MurG"/>
</dbReference>
<dbReference type="InterPro" id="IPR007235">
    <property type="entry name" value="Glyco_trans_28_C"/>
</dbReference>
<dbReference type="InterPro" id="IPR004276">
    <property type="entry name" value="GlycoTrans_28_N"/>
</dbReference>
<dbReference type="NCBIfam" id="TIGR01133">
    <property type="entry name" value="murG"/>
    <property type="match status" value="1"/>
</dbReference>
<dbReference type="PANTHER" id="PTHR21015:SF22">
    <property type="entry name" value="GLYCOSYLTRANSFERASE"/>
    <property type="match status" value="1"/>
</dbReference>
<dbReference type="PANTHER" id="PTHR21015">
    <property type="entry name" value="UDP-N-ACETYLGLUCOSAMINE--N-ACETYLMURAMYL-(PENTAPEPTIDE) PYROPHOSPHORYL-UNDECAPRENOL N-ACETYLGLUCOSAMINE TRANSFERASE 1"/>
    <property type="match status" value="1"/>
</dbReference>
<dbReference type="Pfam" id="PF04101">
    <property type="entry name" value="Glyco_tran_28_C"/>
    <property type="match status" value="1"/>
</dbReference>
<dbReference type="Pfam" id="PF03033">
    <property type="entry name" value="Glyco_transf_28"/>
    <property type="match status" value="1"/>
</dbReference>
<dbReference type="SUPFAM" id="SSF53756">
    <property type="entry name" value="UDP-Glycosyltransferase/glycogen phosphorylase"/>
    <property type="match status" value="1"/>
</dbReference>
<sequence>MTDAGKRILVMAGGTGGHVFPALAVAKYLAQQGWQVRWLGTADRMEARLVPQYGFDIDFIDIKGVRGNGLVRKLAAPFKVVRSILQAKAVIAEFKPDVVLGMGGFASGPGGVAAKLAGVPLVLHEQNAIPGMTNKLLSRIASQVLCAFKNTFTQVKAKVVGNPIRRELIALGGEPKQTADEALKVLVVGGSLGAKVFNDLMPEVVAALSKQQSITVWHQVGKDNLAGVKSAYQQQGQDGGVNVAEFIDDMEAAYRWADVVLCRAGALTVSELAAVGLPSILVPYPHAVDDHQTRNAQVLVEAGAAFLLPQAILDVNKLVSKLQLLANDRAELARMGQRARDVAVLDATEQVAQVCIALAEKG</sequence>
<organism>
    <name type="scientific">Shewanella oneidensis (strain ATCC 700550 / JCM 31522 / CIP 106686 / LMG 19005 / NCIMB 14063 / MR-1)</name>
    <dbReference type="NCBI Taxonomy" id="211586"/>
    <lineage>
        <taxon>Bacteria</taxon>
        <taxon>Pseudomonadati</taxon>
        <taxon>Pseudomonadota</taxon>
        <taxon>Gammaproteobacteria</taxon>
        <taxon>Alteromonadales</taxon>
        <taxon>Shewanellaceae</taxon>
        <taxon>Shewanella</taxon>
    </lineage>
</organism>
<accession>Q8CX35</accession>
<name>MURG_SHEON</name>
<gene>
    <name evidence="1" type="primary">murG</name>
    <name type="ordered locus">SO_4219</name>
</gene>
<evidence type="ECO:0000255" key="1">
    <source>
        <dbReference type="HAMAP-Rule" id="MF_00033"/>
    </source>
</evidence>